<reference key="1">
    <citation type="journal article" date="2014" name="Stand. Genomic Sci.">
        <title>Complete genome sequence of Anabaena variabilis ATCC 29413.</title>
        <authorList>
            <person name="Thiel T."/>
            <person name="Pratte B.S."/>
            <person name="Zhong J."/>
            <person name="Goodwin L."/>
            <person name="Copeland A."/>
            <person name="Lucas S."/>
            <person name="Han C."/>
            <person name="Pitluck S."/>
            <person name="Land M.L."/>
            <person name="Kyrpides N.C."/>
            <person name="Woyke T."/>
        </authorList>
    </citation>
    <scope>NUCLEOTIDE SEQUENCE [LARGE SCALE GENOMIC DNA]</scope>
    <source>
        <strain>ATCC 29413 / PCC 7937</strain>
    </source>
</reference>
<protein>
    <recommendedName>
        <fullName>Probable RuBisCO transcriptional regulator</fullName>
    </recommendedName>
</protein>
<comment type="function">
    <text evidence="1">Trans-acting transcriptional regulator of RuBisCO genes (rbcL and rbcS) expression.</text>
</comment>
<comment type="similarity">
    <text evidence="3">Belongs to the LysR transcriptional regulatory family.</text>
</comment>
<feature type="chain" id="PRO_0000280081" description="Probable RuBisCO transcriptional regulator">
    <location>
        <begin position="1"/>
        <end position="337"/>
    </location>
</feature>
<feature type="domain" description="HTH lysR-type" evidence="2">
    <location>
        <begin position="6"/>
        <end position="63"/>
    </location>
</feature>
<feature type="DNA-binding region" description="H-T-H motif" evidence="2">
    <location>
        <begin position="23"/>
        <end position="42"/>
    </location>
</feature>
<accession>Q3MCB5</accession>
<sequence>MSDLPFTLDQLRILKAIAVEGSFKRAADSLYVSQPAVSLQVQNLERQLDVPLFDRGGRRAQLTEAGHLLLNYGEKILSLCQETCRAIEDLQNLQGGTLIVGASQTTGTYLLPKMIGMFRQKYPDVAVQLHVHSTRRTAWSVANGQVDLAIIGGEIPGELTESLEIIPYAEDELALILPVFHPFTKQETIQKEDLYKLQFITLDSQSTIRKVIDQVLSRSEIDTRRFKIEMELNSIEAIKNAVQSGLGAAFVSTSAIAKELQMGVLHCTPIDGVVIKRTLWLIFNPNRYRSKAAEAFSQEILPQFATPDWNQDVLKLVQKKLVVNVLDAAIPNTSDDG</sequence>
<proteinExistence type="inferred from homology"/>
<dbReference type="EMBL" id="CP000117">
    <property type="protein sequence ID" value="ABA21371.1"/>
    <property type="molecule type" value="Genomic_DNA"/>
</dbReference>
<dbReference type="SMR" id="Q3MCB5"/>
<dbReference type="STRING" id="240292.Ava_1749"/>
<dbReference type="KEGG" id="ava:Ava_1749"/>
<dbReference type="eggNOG" id="COG0583">
    <property type="taxonomic scope" value="Bacteria"/>
</dbReference>
<dbReference type="HOGENOM" id="CLU_039613_6_1_3"/>
<dbReference type="Proteomes" id="UP000002533">
    <property type="component" value="Chromosome"/>
</dbReference>
<dbReference type="GO" id="GO:0003700">
    <property type="term" value="F:DNA-binding transcription factor activity"/>
    <property type="evidence" value="ECO:0007669"/>
    <property type="project" value="InterPro"/>
</dbReference>
<dbReference type="GO" id="GO:0000976">
    <property type="term" value="F:transcription cis-regulatory region binding"/>
    <property type="evidence" value="ECO:0007669"/>
    <property type="project" value="TreeGrafter"/>
</dbReference>
<dbReference type="CDD" id="cd08420">
    <property type="entry name" value="PBP2_CysL_like"/>
    <property type="match status" value="1"/>
</dbReference>
<dbReference type="FunFam" id="1.10.10.10:FF:000001">
    <property type="entry name" value="LysR family transcriptional regulator"/>
    <property type="match status" value="1"/>
</dbReference>
<dbReference type="Gene3D" id="3.40.190.290">
    <property type="match status" value="1"/>
</dbReference>
<dbReference type="Gene3D" id="1.10.10.10">
    <property type="entry name" value="Winged helix-like DNA-binding domain superfamily/Winged helix DNA-binding domain"/>
    <property type="match status" value="1"/>
</dbReference>
<dbReference type="InterPro" id="IPR005119">
    <property type="entry name" value="LysR_subst-bd"/>
</dbReference>
<dbReference type="InterPro" id="IPR000847">
    <property type="entry name" value="Tscrpt_reg_HTH_LysR"/>
</dbReference>
<dbReference type="InterPro" id="IPR036388">
    <property type="entry name" value="WH-like_DNA-bd_sf"/>
</dbReference>
<dbReference type="InterPro" id="IPR036390">
    <property type="entry name" value="WH_DNA-bd_sf"/>
</dbReference>
<dbReference type="PANTHER" id="PTHR30126">
    <property type="entry name" value="HTH-TYPE TRANSCRIPTIONAL REGULATOR"/>
    <property type="match status" value="1"/>
</dbReference>
<dbReference type="PANTHER" id="PTHR30126:SF39">
    <property type="entry name" value="HTH-TYPE TRANSCRIPTIONAL REGULATOR CYSL"/>
    <property type="match status" value="1"/>
</dbReference>
<dbReference type="Pfam" id="PF00126">
    <property type="entry name" value="HTH_1"/>
    <property type="match status" value="1"/>
</dbReference>
<dbReference type="Pfam" id="PF03466">
    <property type="entry name" value="LysR_substrate"/>
    <property type="match status" value="1"/>
</dbReference>
<dbReference type="PRINTS" id="PR00039">
    <property type="entry name" value="HTHLYSR"/>
</dbReference>
<dbReference type="SUPFAM" id="SSF53850">
    <property type="entry name" value="Periplasmic binding protein-like II"/>
    <property type="match status" value="1"/>
</dbReference>
<dbReference type="SUPFAM" id="SSF46785">
    <property type="entry name" value="Winged helix' DNA-binding domain"/>
    <property type="match status" value="1"/>
</dbReference>
<dbReference type="PROSITE" id="PS50931">
    <property type="entry name" value="HTH_LYSR"/>
    <property type="match status" value="1"/>
</dbReference>
<keyword id="KW-0238">DNA-binding</keyword>
<keyword id="KW-0804">Transcription</keyword>
<keyword id="KW-0805">Transcription regulation</keyword>
<evidence type="ECO:0000250" key="1"/>
<evidence type="ECO:0000255" key="2">
    <source>
        <dbReference type="PROSITE-ProRule" id="PRU00253"/>
    </source>
</evidence>
<evidence type="ECO:0000305" key="3"/>
<name>RBCR_TRIV2</name>
<organism>
    <name type="scientific">Trichormus variabilis (strain ATCC 29413 / PCC 7937)</name>
    <name type="common">Anabaena variabilis</name>
    <dbReference type="NCBI Taxonomy" id="240292"/>
    <lineage>
        <taxon>Bacteria</taxon>
        <taxon>Bacillati</taxon>
        <taxon>Cyanobacteriota</taxon>
        <taxon>Cyanophyceae</taxon>
        <taxon>Nostocales</taxon>
        <taxon>Nostocaceae</taxon>
        <taxon>Trichormus</taxon>
    </lineage>
</organism>
<gene>
    <name type="primary">rbcR</name>
    <name type="ordered locus">Ava_1749</name>
</gene>